<reference key="1">
    <citation type="journal article" date="2004" name="Nature">
        <title>The DNA sequence and comparative analysis of human chromosome 10.</title>
        <authorList>
            <person name="Deloukas P."/>
            <person name="Earthrowl M.E."/>
            <person name="Grafham D.V."/>
            <person name="Rubenfield M."/>
            <person name="French L."/>
            <person name="Steward C.A."/>
            <person name="Sims S.K."/>
            <person name="Jones M.C."/>
            <person name="Searle S."/>
            <person name="Scott C."/>
            <person name="Howe K."/>
            <person name="Hunt S.E."/>
            <person name="Andrews T.D."/>
            <person name="Gilbert J.G.R."/>
            <person name="Swarbreck D."/>
            <person name="Ashurst J.L."/>
            <person name="Taylor A."/>
            <person name="Battles J."/>
            <person name="Bird C.P."/>
            <person name="Ainscough R."/>
            <person name="Almeida J.P."/>
            <person name="Ashwell R.I.S."/>
            <person name="Ambrose K.D."/>
            <person name="Babbage A.K."/>
            <person name="Bagguley C.L."/>
            <person name="Bailey J."/>
            <person name="Banerjee R."/>
            <person name="Bates K."/>
            <person name="Beasley H."/>
            <person name="Bray-Allen S."/>
            <person name="Brown A.J."/>
            <person name="Brown J.Y."/>
            <person name="Burford D.C."/>
            <person name="Burrill W."/>
            <person name="Burton J."/>
            <person name="Cahill P."/>
            <person name="Camire D."/>
            <person name="Carter N.P."/>
            <person name="Chapman J.C."/>
            <person name="Clark S.Y."/>
            <person name="Clarke G."/>
            <person name="Clee C.M."/>
            <person name="Clegg S."/>
            <person name="Corby N."/>
            <person name="Coulson A."/>
            <person name="Dhami P."/>
            <person name="Dutta I."/>
            <person name="Dunn M."/>
            <person name="Faulkner L."/>
            <person name="Frankish A."/>
            <person name="Frankland J.A."/>
            <person name="Garner P."/>
            <person name="Garnett J."/>
            <person name="Gribble S."/>
            <person name="Griffiths C."/>
            <person name="Grocock R."/>
            <person name="Gustafson E."/>
            <person name="Hammond S."/>
            <person name="Harley J.L."/>
            <person name="Hart E."/>
            <person name="Heath P.D."/>
            <person name="Ho T.P."/>
            <person name="Hopkins B."/>
            <person name="Horne J."/>
            <person name="Howden P.J."/>
            <person name="Huckle E."/>
            <person name="Hynds C."/>
            <person name="Johnson C."/>
            <person name="Johnson D."/>
            <person name="Kana A."/>
            <person name="Kay M."/>
            <person name="Kimberley A.M."/>
            <person name="Kershaw J.K."/>
            <person name="Kokkinaki M."/>
            <person name="Laird G.K."/>
            <person name="Lawlor S."/>
            <person name="Lee H.M."/>
            <person name="Leongamornlert D.A."/>
            <person name="Laird G."/>
            <person name="Lloyd C."/>
            <person name="Lloyd D.M."/>
            <person name="Loveland J."/>
            <person name="Lovell J."/>
            <person name="McLaren S."/>
            <person name="McLay K.E."/>
            <person name="McMurray A."/>
            <person name="Mashreghi-Mohammadi M."/>
            <person name="Matthews L."/>
            <person name="Milne S."/>
            <person name="Nickerson T."/>
            <person name="Nguyen M."/>
            <person name="Overton-Larty E."/>
            <person name="Palmer S.A."/>
            <person name="Pearce A.V."/>
            <person name="Peck A.I."/>
            <person name="Pelan S."/>
            <person name="Phillimore B."/>
            <person name="Porter K."/>
            <person name="Rice C.M."/>
            <person name="Rogosin A."/>
            <person name="Ross M.T."/>
            <person name="Sarafidou T."/>
            <person name="Sehra H.K."/>
            <person name="Shownkeen R."/>
            <person name="Skuce C.D."/>
            <person name="Smith M."/>
            <person name="Standring L."/>
            <person name="Sycamore N."/>
            <person name="Tester J."/>
            <person name="Thorpe A."/>
            <person name="Torcasso W."/>
            <person name="Tracey A."/>
            <person name="Tromans A."/>
            <person name="Tsolas J."/>
            <person name="Wall M."/>
            <person name="Walsh J."/>
            <person name="Wang H."/>
            <person name="Weinstock K."/>
            <person name="West A.P."/>
            <person name="Willey D.L."/>
            <person name="Whitehead S.L."/>
            <person name="Wilming L."/>
            <person name="Wray P.W."/>
            <person name="Young L."/>
            <person name="Chen Y."/>
            <person name="Lovering R.C."/>
            <person name="Moschonas N.K."/>
            <person name="Siebert R."/>
            <person name="Fechtel K."/>
            <person name="Bentley D."/>
            <person name="Durbin R.M."/>
            <person name="Hubbard T."/>
            <person name="Doucette-Stamm L."/>
            <person name="Beck S."/>
            <person name="Smith D.R."/>
            <person name="Rogers J."/>
        </authorList>
    </citation>
    <scope>NUCLEOTIDE SEQUENCE [LARGE SCALE GENOMIC DNA]</scope>
</reference>
<reference key="2">
    <citation type="submission" date="2005-09" db="EMBL/GenBank/DDBJ databases">
        <authorList>
            <person name="Mural R.J."/>
            <person name="Istrail S."/>
            <person name="Sutton G.G."/>
            <person name="Florea L."/>
            <person name="Halpern A.L."/>
            <person name="Mobarry C.M."/>
            <person name="Lippert R."/>
            <person name="Walenz B."/>
            <person name="Shatkay H."/>
            <person name="Dew I."/>
            <person name="Miller J.R."/>
            <person name="Flanigan M.J."/>
            <person name="Edwards N.J."/>
            <person name="Bolanos R."/>
            <person name="Fasulo D."/>
            <person name="Halldorsson B.V."/>
            <person name="Hannenhalli S."/>
            <person name="Turner R."/>
            <person name="Yooseph S."/>
            <person name="Lu F."/>
            <person name="Nusskern D.R."/>
            <person name="Shue B.C."/>
            <person name="Zheng X.H."/>
            <person name="Zhong F."/>
            <person name="Delcher A.L."/>
            <person name="Huson D.H."/>
            <person name="Kravitz S.A."/>
            <person name="Mouchard L."/>
            <person name="Reinert K."/>
            <person name="Remington K.A."/>
            <person name="Clark A.G."/>
            <person name="Waterman M.S."/>
            <person name="Eichler E.E."/>
            <person name="Adams M.D."/>
            <person name="Hunkapiller M.W."/>
            <person name="Myers E.W."/>
            <person name="Venter J.C."/>
        </authorList>
    </citation>
    <scope>NUCLEOTIDE SEQUENCE [LARGE SCALE GENOMIC DNA]</scope>
    <scope>VARIANT THR-269</scope>
</reference>
<reference key="3">
    <citation type="journal article" date="2004" name="Genome Res.">
        <title>The status, quality, and expansion of the NIH full-length cDNA project: the Mammalian Gene Collection (MGC).</title>
        <authorList>
            <consortium name="The MGC Project Team"/>
        </authorList>
    </citation>
    <scope>NUCLEOTIDE SEQUENCE [LARGE SCALE MRNA]</scope>
    <scope>VARIANT THR-269</scope>
    <source>
        <tissue>Testis</tissue>
    </source>
</reference>
<proteinExistence type="evidence at protein level"/>
<evidence type="ECO:0000250" key="1">
    <source>
        <dbReference type="UniProtKB" id="Q8CDT9"/>
    </source>
</evidence>
<evidence type="ECO:0000256" key="2">
    <source>
        <dbReference type="SAM" id="MobiDB-lite"/>
    </source>
</evidence>
<evidence type="ECO:0000269" key="3">
    <source>
    </source>
</evidence>
<evidence type="ECO:0000269" key="4">
    <source ref="2"/>
</evidence>
<keyword id="KW-1267">Proteomics identification</keyword>
<keyword id="KW-1185">Reference proteome</keyword>
<protein>
    <recommendedName>
        <fullName>Uncharacterized protein C10orf120</fullName>
    </recommendedName>
</protein>
<comment type="function">
    <text evidence="1">Dispensable for normal development and fertility.</text>
</comment>
<comment type="interaction">
    <interactant intactId="EBI-12176257">
        <id>Q5SQS8</id>
    </interactant>
    <interactant intactId="EBI-16439278">
        <id>Q6FHY5</id>
        <label>MEOX2</label>
    </interactant>
    <organismsDiffer>false</organismsDiffer>
    <experiments>3</experiments>
</comment>
<name>CJ120_HUMAN</name>
<organism>
    <name type="scientific">Homo sapiens</name>
    <name type="common">Human</name>
    <dbReference type="NCBI Taxonomy" id="9606"/>
    <lineage>
        <taxon>Eukaryota</taxon>
        <taxon>Metazoa</taxon>
        <taxon>Chordata</taxon>
        <taxon>Craniata</taxon>
        <taxon>Vertebrata</taxon>
        <taxon>Euteleostomi</taxon>
        <taxon>Mammalia</taxon>
        <taxon>Eutheria</taxon>
        <taxon>Euarchontoglires</taxon>
        <taxon>Primates</taxon>
        <taxon>Haplorrhini</taxon>
        <taxon>Catarrhini</taxon>
        <taxon>Hominidae</taxon>
        <taxon>Homo</taxon>
    </lineage>
</organism>
<sequence>MIREWKNDCQRIEKQRASDTMVQERKNEKPVRIFNTNSSFQDQAPTCCQEDLSSASPLRIWSKFYRSDPRIALGKYSPLEKEILRLGGIHTIAARRLLAYKQEEECRMLKELQLLSPDYKQAMEYKKKHSSPCAICVPLEKIWTAKVIAPLEAFKMPQREQVNVSKHIERMRLARALGNHQPLPYIERFTRSSFLSGVGLGPMAKNKARRKEDNYDTHNCDDANQDKKEEAEGKNTKRREIKMNVVFKSKEPKKCLTYHGNDRKSFLPAKKPERSIAGLTNRNLFCISEFPGDLMLMNQDFISRRDHFSDLVKTYSLEEESIWKERMRKATPYHY</sequence>
<dbReference type="EMBL" id="AL731543">
    <property type="status" value="NOT_ANNOTATED_CDS"/>
    <property type="molecule type" value="Genomic_DNA"/>
</dbReference>
<dbReference type="EMBL" id="CH471066">
    <property type="protein sequence ID" value="EAW49307.1"/>
    <property type="molecule type" value="Genomic_DNA"/>
</dbReference>
<dbReference type="EMBL" id="BC140922">
    <property type="protein sequence ID" value="AAI40923.1"/>
    <property type="molecule type" value="mRNA"/>
</dbReference>
<dbReference type="EMBL" id="BC065903">
    <property type="status" value="NOT_ANNOTATED_CDS"/>
    <property type="molecule type" value="mRNA"/>
</dbReference>
<dbReference type="CCDS" id="CCDS31302.1"/>
<dbReference type="RefSeq" id="NP_001010912.1">
    <property type="nucleotide sequence ID" value="NM_001010912.4"/>
</dbReference>
<dbReference type="BioGRID" id="134419">
    <property type="interactions" value="4"/>
</dbReference>
<dbReference type="IntAct" id="Q5SQS8">
    <property type="interactions" value="4"/>
</dbReference>
<dbReference type="STRING" id="9606.ENSP00000331012"/>
<dbReference type="iPTMnet" id="Q5SQS8"/>
<dbReference type="PhosphoSitePlus" id="Q5SQS8"/>
<dbReference type="BioMuta" id="C10orf120"/>
<dbReference type="DMDM" id="74743566"/>
<dbReference type="MassIVE" id="Q5SQS8"/>
<dbReference type="PaxDb" id="9606-ENSP00000331012"/>
<dbReference type="PeptideAtlas" id="Q5SQS8"/>
<dbReference type="ProteomicsDB" id="63822"/>
<dbReference type="Antibodypedia" id="49180">
    <property type="antibodies" value="20 antibodies from 7 providers"/>
</dbReference>
<dbReference type="DNASU" id="399814"/>
<dbReference type="Ensembl" id="ENST00000329446.5">
    <property type="protein sequence ID" value="ENSP00000331012.4"/>
    <property type="gene ID" value="ENSG00000183559.12"/>
</dbReference>
<dbReference type="GeneID" id="399814"/>
<dbReference type="KEGG" id="hsa:399814"/>
<dbReference type="MANE-Select" id="ENST00000329446.5">
    <property type="protein sequence ID" value="ENSP00000331012.4"/>
    <property type="RefSeq nucleotide sequence ID" value="NM_001010912.4"/>
    <property type="RefSeq protein sequence ID" value="NP_001010912.1"/>
</dbReference>
<dbReference type="UCSC" id="uc001lgn.3">
    <property type="organism name" value="human"/>
</dbReference>
<dbReference type="AGR" id="HGNC:25707"/>
<dbReference type="CTD" id="399814"/>
<dbReference type="GeneCards" id="C10orf120"/>
<dbReference type="HGNC" id="HGNC:25707">
    <property type="gene designation" value="C10orf120"/>
</dbReference>
<dbReference type="HPA" id="ENSG00000183559">
    <property type="expression patterns" value="Tissue enriched (testis)"/>
</dbReference>
<dbReference type="neXtProt" id="NX_Q5SQS8"/>
<dbReference type="OpenTargets" id="ENSG00000183559"/>
<dbReference type="PharmGKB" id="PA134871711"/>
<dbReference type="VEuPathDB" id="HostDB:ENSG00000183559"/>
<dbReference type="eggNOG" id="ENOG502RNK6">
    <property type="taxonomic scope" value="Eukaryota"/>
</dbReference>
<dbReference type="GeneTree" id="ENSGT00390000005511"/>
<dbReference type="HOGENOM" id="CLU_071615_0_0_1"/>
<dbReference type="InParanoid" id="Q5SQS8"/>
<dbReference type="OMA" id="MNVVFKS"/>
<dbReference type="OrthoDB" id="9446792at2759"/>
<dbReference type="PAN-GO" id="Q5SQS8">
    <property type="GO annotations" value="0 GO annotations based on evolutionary models"/>
</dbReference>
<dbReference type="PhylomeDB" id="Q5SQS8"/>
<dbReference type="TreeFam" id="TF337245"/>
<dbReference type="PathwayCommons" id="Q5SQS8"/>
<dbReference type="SignaLink" id="Q5SQS8"/>
<dbReference type="BioGRID-ORCS" id="399814">
    <property type="hits" value="4 hits in 1113 CRISPR screens"/>
</dbReference>
<dbReference type="GenomeRNAi" id="399814"/>
<dbReference type="Pharos" id="Q5SQS8">
    <property type="development level" value="Tdark"/>
</dbReference>
<dbReference type="PRO" id="PR:Q5SQS8"/>
<dbReference type="Proteomes" id="UP000005640">
    <property type="component" value="Chromosome 10"/>
</dbReference>
<dbReference type="RNAct" id="Q5SQS8">
    <property type="molecule type" value="protein"/>
</dbReference>
<dbReference type="Bgee" id="ENSG00000183559">
    <property type="expression patterns" value="Expressed in male germ line stem cell (sensu Vertebrata) in testis and 23 other cell types or tissues"/>
</dbReference>
<dbReference type="ExpressionAtlas" id="Q5SQS8">
    <property type="expression patterns" value="baseline and differential"/>
</dbReference>
<dbReference type="InterPro" id="IPR040721">
    <property type="entry name" value="DUF5520"/>
</dbReference>
<dbReference type="PANTHER" id="PTHR47509">
    <property type="entry name" value="MCG1612"/>
    <property type="match status" value="1"/>
</dbReference>
<dbReference type="PANTHER" id="PTHR47509:SF1">
    <property type="entry name" value="RIKEN CDNA 4933402N03 GENE"/>
    <property type="match status" value="1"/>
</dbReference>
<dbReference type="Pfam" id="PF17658">
    <property type="entry name" value="DUF5520"/>
    <property type="match status" value="1"/>
</dbReference>
<feature type="chain" id="PRO_0000243940" description="Uncharacterized protein C10orf120">
    <location>
        <begin position="1"/>
        <end position="335"/>
    </location>
</feature>
<feature type="region of interest" description="Disordered" evidence="2">
    <location>
        <begin position="201"/>
        <end position="236"/>
    </location>
</feature>
<feature type="compositionally biased region" description="Basic and acidic residues" evidence="2">
    <location>
        <begin position="210"/>
        <end position="235"/>
    </location>
</feature>
<feature type="sequence variant" id="VAR_050859" description="In dbSNP:rs41448048.">
    <original>T</original>
    <variation>K</variation>
    <location>
        <position position="20"/>
    </location>
</feature>
<feature type="sequence variant" id="VAR_050860" description="In dbSNP:rs2947594." evidence="3 4">
    <original>A</original>
    <variation>T</variation>
    <location>
        <position position="269"/>
    </location>
</feature>
<accession>Q5SQS8</accession>
<accession>B2RU17</accession>
<gene>
    <name type="primary">C10orf120</name>
</gene>